<proteinExistence type="inferred from homology"/>
<organism>
    <name type="scientific">Pseudomonas putida</name>
    <name type="common">Arthrobacter siderocapsulatus</name>
    <dbReference type="NCBI Taxonomy" id="303"/>
    <lineage>
        <taxon>Bacteria</taxon>
        <taxon>Pseudomonadati</taxon>
        <taxon>Pseudomonadota</taxon>
        <taxon>Gammaproteobacteria</taxon>
        <taxon>Pseudomonadales</taxon>
        <taxon>Pseudomonadaceae</taxon>
        <taxon>Pseudomonas</taxon>
    </lineage>
</organism>
<reference key="1">
    <citation type="journal article" date="1989" name="Gene">
        <title>Cloning and sequence analysis of the ntrA (rpoN) gene of Pseudomonas putida.</title>
        <authorList>
            <person name="Inouye S."/>
            <person name="Yamada M."/>
            <person name="Nakazawa A."/>
            <person name="Nakazawa T."/>
        </authorList>
    </citation>
    <scope>NUCLEOTIDE SEQUENCE [GENOMIC DNA]</scope>
    <source>
        <strain>TN2100</strain>
    </source>
</reference>
<accession>P0A148</accession>
<accession>P15592</accession>
<feature type="chain" id="PRO_0000097423" description="Ribosome hibernation promoting factor">
    <location>
        <begin position="1"/>
        <end position="102"/>
    </location>
</feature>
<sequence>MQVNISGQHVEVTQPLRDYVLEKLARVESHFDKITNVQVIMKVEKLQQKVEATLQIPGGEVVANAEHEDMYAAIDALADKLDRQLKKHKEKQQSLLQGAAAR</sequence>
<comment type="function">
    <text evidence="1">During stationary phase, promotes and stabilizes dimerization of 70S ribosomes by the ribosome modulation factor (RMF), leading to the formation of inactive 100S ribosomes.</text>
</comment>
<comment type="subunit">
    <text evidence="1">Associates exclusively with 100S ribosomes, which are dimers of 70S ribosomes.</text>
</comment>
<comment type="similarity">
    <text evidence="2">Belongs to the HPF/YfiA ribosome-associated protein family. Short HPF subfamily.</text>
</comment>
<dbReference type="EMBL" id="M24916">
    <property type="protein sequence ID" value="AAA88445.1"/>
    <property type="molecule type" value="Genomic_DNA"/>
</dbReference>
<dbReference type="PIR" id="JQ0339">
    <property type="entry name" value="JQ0339"/>
</dbReference>
<dbReference type="RefSeq" id="WP_003255135.1">
    <property type="nucleotide sequence ID" value="NZ_VCPS01000007.1"/>
</dbReference>
<dbReference type="SMR" id="P0A148"/>
<dbReference type="GeneID" id="97166467"/>
<dbReference type="eggNOG" id="COG1544">
    <property type="taxonomic scope" value="Bacteria"/>
</dbReference>
<dbReference type="OMA" id="NLTGHHI"/>
<dbReference type="OrthoDB" id="9795980at2"/>
<dbReference type="GO" id="GO:0022627">
    <property type="term" value="C:cytosolic small ribosomal subunit"/>
    <property type="evidence" value="ECO:0007669"/>
    <property type="project" value="TreeGrafter"/>
</dbReference>
<dbReference type="GO" id="GO:0043024">
    <property type="term" value="F:ribosomal small subunit binding"/>
    <property type="evidence" value="ECO:0007669"/>
    <property type="project" value="TreeGrafter"/>
</dbReference>
<dbReference type="GO" id="GO:0045900">
    <property type="term" value="P:negative regulation of translational elongation"/>
    <property type="evidence" value="ECO:0007669"/>
    <property type="project" value="TreeGrafter"/>
</dbReference>
<dbReference type="CDD" id="cd00552">
    <property type="entry name" value="RaiA"/>
    <property type="match status" value="1"/>
</dbReference>
<dbReference type="FunFam" id="3.30.160.100:FF:000001">
    <property type="entry name" value="Ribosome hibernation promoting factor"/>
    <property type="match status" value="1"/>
</dbReference>
<dbReference type="Gene3D" id="3.30.160.100">
    <property type="entry name" value="Ribosome hibernation promotion factor-like"/>
    <property type="match status" value="1"/>
</dbReference>
<dbReference type="InterPro" id="IPR050574">
    <property type="entry name" value="HPF/YfiA_ribosome-assoc"/>
</dbReference>
<dbReference type="InterPro" id="IPR036567">
    <property type="entry name" value="RHF-like"/>
</dbReference>
<dbReference type="InterPro" id="IPR003489">
    <property type="entry name" value="RHF/RaiA"/>
</dbReference>
<dbReference type="NCBIfam" id="TIGR00741">
    <property type="entry name" value="yfiA"/>
    <property type="match status" value="1"/>
</dbReference>
<dbReference type="PANTHER" id="PTHR33231">
    <property type="entry name" value="30S RIBOSOMAL PROTEIN"/>
    <property type="match status" value="1"/>
</dbReference>
<dbReference type="PANTHER" id="PTHR33231:SF1">
    <property type="entry name" value="30S RIBOSOMAL PROTEIN"/>
    <property type="match status" value="1"/>
</dbReference>
<dbReference type="Pfam" id="PF02482">
    <property type="entry name" value="Ribosomal_S30AE"/>
    <property type="match status" value="1"/>
</dbReference>
<dbReference type="SUPFAM" id="SSF69754">
    <property type="entry name" value="Ribosome binding protein Y (YfiA homologue)"/>
    <property type="match status" value="1"/>
</dbReference>
<keyword id="KW-0810">Translation regulation</keyword>
<name>HPF_PSEPU</name>
<evidence type="ECO:0000250" key="1">
    <source>
        <dbReference type="UniProtKB" id="P0AFX0"/>
    </source>
</evidence>
<evidence type="ECO:0000305" key="2"/>
<protein>
    <recommendedName>
        <fullName>Ribosome hibernation promoting factor</fullName>
        <shortName>HPF</shortName>
    </recommendedName>
    <alternativeName>
        <fullName>Hibernation factor HPF</fullName>
    </alternativeName>
</protein>
<gene>
    <name type="primary">hpf</name>
    <name type="synonym">rpoX</name>
</gene>